<name>ATGT_SACS2</name>
<reference key="1">
    <citation type="journal article" date="2001" name="Proc. Natl. Acad. Sci. U.S.A.">
        <title>The complete genome of the crenarchaeon Sulfolobus solfataricus P2.</title>
        <authorList>
            <person name="She Q."/>
            <person name="Singh R.K."/>
            <person name="Confalonieri F."/>
            <person name="Zivanovic Y."/>
            <person name="Allard G."/>
            <person name="Awayez M.J."/>
            <person name="Chan-Weiher C.C.-Y."/>
            <person name="Clausen I.G."/>
            <person name="Curtis B.A."/>
            <person name="De Moors A."/>
            <person name="Erauso G."/>
            <person name="Fletcher C."/>
            <person name="Gordon P.M.K."/>
            <person name="Heikamp-de Jong I."/>
            <person name="Jeffries A.C."/>
            <person name="Kozera C.J."/>
            <person name="Medina N."/>
            <person name="Peng X."/>
            <person name="Thi-Ngoc H.P."/>
            <person name="Redder P."/>
            <person name="Schenk M.E."/>
            <person name="Theriault C."/>
            <person name="Tolstrup N."/>
            <person name="Charlebois R.L."/>
            <person name="Doolittle W.F."/>
            <person name="Duguet M."/>
            <person name="Gaasterland T."/>
            <person name="Garrett R.A."/>
            <person name="Ragan M.A."/>
            <person name="Sensen C.W."/>
            <person name="Van der Oost J."/>
        </authorList>
    </citation>
    <scope>NUCLEOTIDE SEQUENCE [LARGE SCALE GENOMIC DNA]</scope>
    <source>
        <strain>ATCC 35092 / DSM 1617 / JCM 11322 / P2</strain>
    </source>
</reference>
<comment type="function">
    <text evidence="1">Exchanges the guanine residue with 7-cyano-7-deazaguanine (preQ0) at position 15 in the dihydrouridine loop (D-loop) of archaeal tRNAs.</text>
</comment>
<comment type="catalytic activity">
    <reaction evidence="1">
        <text>guanosine(15) in tRNA + 7-cyano-7-deazaguanine = 7-cyano-7-carbaguanosine(15) in tRNA + guanine</text>
        <dbReference type="Rhea" id="RHEA:43164"/>
        <dbReference type="Rhea" id="RHEA-COMP:10371"/>
        <dbReference type="Rhea" id="RHEA-COMP:10372"/>
        <dbReference type="ChEBI" id="CHEBI:16235"/>
        <dbReference type="ChEBI" id="CHEBI:45075"/>
        <dbReference type="ChEBI" id="CHEBI:74269"/>
        <dbReference type="ChEBI" id="CHEBI:82850"/>
        <dbReference type="EC" id="2.4.2.48"/>
    </reaction>
</comment>
<comment type="cofactor">
    <cofactor evidence="1">
        <name>Zn(2+)</name>
        <dbReference type="ChEBI" id="CHEBI:29105"/>
    </cofactor>
    <text evidence="1">Binds 1 zinc ion per subunit.</text>
</comment>
<comment type="pathway">
    <text evidence="1">tRNA modification; archaeosine-tRNA biosynthesis.</text>
</comment>
<comment type="similarity">
    <text evidence="1">Belongs to the archaeosine tRNA-ribosyltransferase family.</text>
</comment>
<dbReference type="EC" id="2.4.2.48" evidence="1"/>
<dbReference type="EMBL" id="AE006641">
    <property type="protein sequence ID" value="AAK40613.1"/>
    <property type="molecule type" value="Genomic_DNA"/>
</dbReference>
<dbReference type="PIR" id="F90169">
    <property type="entry name" value="F90169"/>
</dbReference>
<dbReference type="RefSeq" id="WP_009990551.1">
    <property type="nucleotide sequence ID" value="NC_002754.1"/>
</dbReference>
<dbReference type="SMR" id="Q980L7"/>
<dbReference type="FunCoup" id="Q980L7">
    <property type="interactions" value="178"/>
</dbReference>
<dbReference type="STRING" id="273057.SSO0274"/>
<dbReference type="PaxDb" id="273057-SSO0274"/>
<dbReference type="EnsemblBacteria" id="AAK40613">
    <property type="protein sequence ID" value="AAK40613"/>
    <property type="gene ID" value="SSO0274"/>
</dbReference>
<dbReference type="GeneID" id="44129246"/>
<dbReference type="KEGG" id="sso:SSO0274"/>
<dbReference type="PATRIC" id="fig|273057.12.peg.269"/>
<dbReference type="eggNOG" id="arCOG00989">
    <property type="taxonomic scope" value="Archaea"/>
</dbReference>
<dbReference type="HOGENOM" id="CLU_030083_0_0_2"/>
<dbReference type="InParanoid" id="Q980L7"/>
<dbReference type="PhylomeDB" id="Q980L7"/>
<dbReference type="UniPathway" id="UPA00393"/>
<dbReference type="Proteomes" id="UP000001974">
    <property type="component" value="Chromosome"/>
</dbReference>
<dbReference type="GO" id="GO:0005737">
    <property type="term" value="C:cytoplasm"/>
    <property type="evidence" value="ECO:0000318"/>
    <property type="project" value="GO_Central"/>
</dbReference>
<dbReference type="GO" id="GO:0016763">
    <property type="term" value="F:pentosyltransferase activity"/>
    <property type="evidence" value="ECO:0007669"/>
    <property type="project" value="UniProtKB-UniRule"/>
</dbReference>
<dbReference type="GO" id="GO:0008270">
    <property type="term" value="F:zinc ion binding"/>
    <property type="evidence" value="ECO:0007669"/>
    <property type="project" value="UniProtKB-UniRule"/>
</dbReference>
<dbReference type="GO" id="GO:0002099">
    <property type="term" value="P:tRNA wobble guanine modification"/>
    <property type="evidence" value="ECO:0000318"/>
    <property type="project" value="GO_Central"/>
</dbReference>
<dbReference type="Gene3D" id="3.20.20.105">
    <property type="entry name" value="Queuine tRNA-ribosyltransferase-like"/>
    <property type="match status" value="1"/>
</dbReference>
<dbReference type="Gene3D" id="3.40.50.10630">
    <property type="entry name" value="Uracil-DNA glycosylase-like"/>
    <property type="match status" value="1"/>
</dbReference>
<dbReference type="HAMAP" id="MF_01634">
    <property type="entry name" value="TgtA_arch"/>
    <property type="match status" value="1"/>
</dbReference>
<dbReference type="InterPro" id="IPR050076">
    <property type="entry name" value="ArchSynthase1/Queuine_TRR"/>
</dbReference>
<dbReference type="InterPro" id="IPR036511">
    <property type="entry name" value="TGT-like_sf"/>
</dbReference>
<dbReference type="InterPro" id="IPR004804">
    <property type="entry name" value="TgtA"/>
</dbReference>
<dbReference type="InterPro" id="IPR002616">
    <property type="entry name" value="tRNA_ribo_trans-like"/>
</dbReference>
<dbReference type="NCBIfam" id="TIGR00432">
    <property type="entry name" value="arcsn_tRNA_tgt"/>
    <property type="match status" value="1"/>
</dbReference>
<dbReference type="NCBIfam" id="TIGR00449">
    <property type="entry name" value="tgt_general"/>
    <property type="match status" value="1"/>
</dbReference>
<dbReference type="PANTHER" id="PTHR46499">
    <property type="entry name" value="QUEUINE TRNA-RIBOSYLTRANSFERASE"/>
    <property type="match status" value="1"/>
</dbReference>
<dbReference type="PANTHER" id="PTHR46499:SF1">
    <property type="entry name" value="QUEUINE TRNA-RIBOSYLTRANSFERASE"/>
    <property type="match status" value="1"/>
</dbReference>
<dbReference type="Pfam" id="PF01702">
    <property type="entry name" value="TGT"/>
    <property type="match status" value="1"/>
</dbReference>
<dbReference type="SUPFAM" id="SSF88802">
    <property type="entry name" value="Pre-PUA domain"/>
    <property type="match status" value="1"/>
</dbReference>
<dbReference type="SUPFAM" id="SSF51713">
    <property type="entry name" value="tRNA-guanine transglycosylase"/>
    <property type="match status" value="1"/>
</dbReference>
<organism>
    <name type="scientific">Saccharolobus solfataricus (strain ATCC 35092 / DSM 1617 / JCM 11322 / P2)</name>
    <name type="common">Sulfolobus solfataricus</name>
    <dbReference type="NCBI Taxonomy" id="273057"/>
    <lineage>
        <taxon>Archaea</taxon>
        <taxon>Thermoproteota</taxon>
        <taxon>Thermoprotei</taxon>
        <taxon>Sulfolobales</taxon>
        <taxon>Sulfolobaceae</taxon>
        <taxon>Saccharolobus</taxon>
    </lineage>
</organism>
<evidence type="ECO:0000255" key="1">
    <source>
        <dbReference type="HAMAP-Rule" id="MF_01634"/>
    </source>
</evidence>
<accession>Q980L7</accession>
<sequence length="503" mass="58318">MTVFEVKYEDLAGRIGTLRTRSGTLETPAFFPVINVLKKDEISIDEIRNIGFKNFITNSYILYKNNYIKDDIHKELRSEEMIIMTDSGAYQILEYGEIGITNLQIVNYQLKIKPDIGVILDLPTGNINDYDNAKKTVYETLKRAEEASEIIVKNQDNNIIWVYPIQGGRYLDLVKTSAEGLSKFEHIYNMAALGSPTVLLEKYMYDTVIDMIYTAKSNIKRGIPFHLFGGGLPHIIPFAVALGVDSFDSASYIIYARDNRYITRTRVYKLEDLEYFPCSCPICSKYTPKDLLEMNEKERTKALAIHNLYTILEEFKATKQAIKEGRLFEYLQEKAYSHPAVYSAFKRLMKYKDYLEKFDPRIRGDPKGLFLFDGNSLHRPEIIRHSRFLERYIQKKDKISIYCYDKAISDTAYDFKEKIREKIADRNESDVFIAVPFFGLIPLEISDSYPLSQFEIPNEIDEDVIDDMKTKIISFLRRNNYQKVELINCEKLGLHIDSISTSS</sequence>
<proteinExistence type="inferred from homology"/>
<protein>
    <recommendedName>
        <fullName evidence="1">tRNA-guanine(15) transglycosylase</fullName>
        <ecNumber evidence="1">2.4.2.48</ecNumber>
    </recommendedName>
    <alternativeName>
        <fullName evidence="1">7-cyano-7-deazaguanine tRNA-ribosyltransferase</fullName>
    </alternativeName>
    <alternativeName>
        <fullName evidence="1">Archaeal tRNA-guanine transglycosylase</fullName>
    </alternativeName>
</protein>
<feature type="chain" id="PRO_0000247885" description="tRNA-guanine(15) transglycosylase">
    <location>
        <begin position="1"/>
        <end position="503"/>
    </location>
</feature>
<feature type="active site" description="Nucleophile" evidence="1">
    <location>
        <position position="86"/>
    </location>
</feature>
<feature type="binding site" evidence="1">
    <location>
        <position position="121"/>
    </location>
    <ligand>
        <name>substrate</name>
    </ligand>
</feature>
<feature type="binding site" evidence="1">
    <location>
        <position position="278"/>
    </location>
    <ligand>
        <name>Zn(2+)</name>
        <dbReference type="ChEBI" id="CHEBI:29105"/>
    </ligand>
</feature>
<feature type="binding site" evidence="1">
    <location>
        <position position="280"/>
    </location>
    <ligand>
        <name>Zn(2+)</name>
        <dbReference type="ChEBI" id="CHEBI:29105"/>
    </ligand>
</feature>
<feature type="binding site" evidence="1">
    <location>
        <position position="283"/>
    </location>
    <ligand>
        <name>Zn(2+)</name>
        <dbReference type="ChEBI" id="CHEBI:29105"/>
    </ligand>
</feature>
<gene>
    <name evidence="1" type="primary">tgtA</name>
    <name type="ordered locus">SSO0274</name>
</gene>
<keyword id="KW-0328">Glycosyltransferase</keyword>
<keyword id="KW-0479">Metal-binding</keyword>
<keyword id="KW-1185">Reference proteome</keyword>
<keyword id="KW-0808">Transferase</keyword>
<keyword id="KW-0819">tRNA processing</keyword>
<keyword id="KW-0862">Zinc</keyword>